<sequence length="290" mass="33216">MTKTSKASGLSWFFCDLDGTLLRYQNNQHLIEPTTKRAVAQLVESGANFVVATGRKPSDVRNIYKELGIEQASPYLIANNGAVVWDLKRNSYLNKQTLSLSDFDLIDHINQTLNQLNHEYGCILYGLNDQVYFYHIHAPDSQAFKQYFAFYEGEFVQNQYLEIDGLKTEYNLVKAIWFFKEVHQQKAVIAQHFTNQERLVITSAHSFELVPLNVSKGHAINLIKQQVKITDNQIMVLGDSYNDLPMFQHGVVKVTNHLAPDNLKQLATRVYELPASLFVGQALNDYFKFD</sequence>
<dbReference type="EC" id="3.1.3.-"/>
<dbReference type="EMBL" id="U00089">
    <property type="protein sequence ID" value="AAB96062.1"/>
    <property type="molecule type" value="Genomic_DNA"/>
</dbReference>
<dbReference type="PIR" id="S73740">
    <property type="entry name" value="S73740"/>
</dbReference>
<dbReference type="RefSeq" id="NP_110115.1">
    <property type="nucleotide sequence ID" value="NC_000912.1"/>
</dbReference>
<dbReference type="RefSeq" id="WP_010874783.1">
    <property type="nucleotide sequence ID" value="NZ_OU342337.1"/>
</dbReference>
<dbReference type="SMR" id="P75360"/>
<dbReference type="STRING" id="272634.MPN_427"/>
<dbReference type="EnsemblBacteria" id="AAB96062">
    <property type="protein sequence ID" value="AAB96062"/>
    <property type="gene ID" value="MPN_427"/>
</dbReference>
<dbReference type="KEGG" id="mpn:MPN_427"/>
<dbReference type="PATRIC" id="fig|272634.6.peg.462"/>
<dbReference type="HOGENOM" id="CLU_044146_0_1_14"/>
<dbReference type="OrthoDB" id="9810101at2"/>
<dbReference type="BioCyc" id="MPNE272634:G1GJ3-691-MONOMER"/>
<dbReference type="Proteomes" id="UP000000808">
    <property type="component" value="Chromosome"/>
</dbReference>
<dbReference type="GO" id="GO:0005829">
    <property type="term" value="C:cytosol"/>
    <property type="evidence" value="ECO:0007669"/>
    <property type="project" value="TreeGrafter"/>
</dbReference>
<dbReference type="GO" id="GO:0000287">
    <property type="term" value="F:magnesium ion binding"/>
    <property type="evidence" value="ECO:0007669"/>
    <property type="project" value="TreeGrafter"/>
</dbReference>
<dbReference type="GO" id="GO:0016791">
    <property type="term" value="F:phosphatase activity"/>
    <property type="evidence" value="ECO:0007669"/>
    <property type="project" value="TreeGrafter"/>
</dbReference>
<dbReference type="Gene3D" id="3.30.1240.10">
    <property type="match status" value="1"/>
</dbReference>
<dbReference type="Gene3D" id="3.40.50.1000">
    <property type="entry name" value="HAD superfamily/HAD-like"/>
    <property type="match status" value="1"/>
</dbReference>
<dbReference type="InterPro" id="IPR000150">
    <property type="entry name" value="Cof"/>
</dbReference>
<dbReference type="InterPro" id="IPR036412">
    <property type="entry name" value="HAD-like_sf"/>
</dbReference>
<dbReference type="InterPro" id="IPR006379">
    <property type="entry name" value="HAD-SF_hydro_IIB"/>
</dbReference>
<dbReference type="InterPro" id="IPR023214">
    <property type="entry name" value="HAD_sf"/>
</dbReference>
<dbReference type="NCBIfam" id="TIGR00099">
    <property type="entry name" value="Cof-subfamily"/>
    <property type="match status" value="1"/>
</dbReference>
<dbReference type="NCBIfam" id="TIGR01484">
    <property type="entry name" value="HAD-SF-IIB"/>
    <property type="match status" value="1"/>
</dbReference>
<dbReference type="PANTHER" id="PTHR10000:SF8">
    <property type="entry name" value="HAD SUPERFAMILY HYDROLASE-LIKE, TYPE 3"/>
    <property type="match status" value="1"/>
</dbReference>
<dbReference type="PANTHER" id="PTHR10000">
    <property type="entry name" value="PHOSPHOSERINE PHOSPHATASE"/>
    <property type="match status" value="1"/>
</dbReference>
<dbReference type="Pfam" id="PF08282">
    <property type="entry name" value="Hydrolase_3"/>
    <property type="match status" value="1"/>
</dbReference>
<dbReference type="SUPFAM" id="SSF56784">
    <property type="entry name" value="HAD-like"/>
    <property type="match status" value="1"/>
</dbReference>
<accession>P75360</accession>
<reference key="1">
    <citation type="journal article" date="1996" name="Nucleic Acids Res.">
        <title>Complete sequence analysis of the genome of the bacterium Mycoplasma pneumoniae.</title>
        <authorList>
            <person name="Himmelreich R."/>
            <person name="Hilbert H."/>
            <person name="Plagens H."/>
            <person name="Pirkl E."/>
            <person name="Li B.-C."/>
            <person name="Herrmann R."/>
        </authorList>
    </citation>
    <scope>NUCLEOTIDE SEQUENCE [LARGE SCALE GENOMIC DNA]</scope>
    <source>
        <strain>ATCC 29342 / M129 / Subtype 1</strain>
    </source>
</reference>
<proteinExistence type="inferred from homology"/>
<feature type="chain" id="PRO_0000054441" description="Putative phosphatase MPN_427">
    <location>
        <begin position="1"/>
        <end position="290"/>
    </location>
</feature>
<feature type="active site" description="Nucleophile" evidence="1">
    <location>
        <position position="16"/>
    </location>
</feature>
<feature type="binding site" evidence="1">
    <location>
        <position position="16"/>
    </location>
    <ligand>
        <name>Mg(2+)</name>
        <dbReference type="ChEBI" id="CHEBI:18420"/>
    </ligand>
</feature>
<feature type="binding site" evidence="1">
    <location>
        <position position="17"/>
    </location>
    <ligand>
        <name>phosphate</name>
        <dbReference type="ChEBI" id="CHEBI:43474"/>
    </ligand>
</feature>
<feature type="binding site" evidence="1">
    <location>
        <position position="18"/>
    </location>
    <ligand>
        <name>Mg(2+)</name>
        <dbReference type="ChEBI" id="CHEBI:18420"/>
    </ligand>
</feature>
<feature type="binding site" evidence="1">
    <location>
        <begin position="53"/>
        <end position="54"/>
    </location>
    <ligand>
        <name>phosphate</name>
        <dbReference type="ChEBI" id="CHEBI:43474"/>
    </ligand>
</feature>
<feature type="binding site" evidence="1">
    <location>
        <position position="216"/>
    </location>
    <ligand>
        <name>phosphate</name>
        <dbReference type="ChEBI" id="CHEBI:43474"/>
    </ligand>
</feature>
<feature type="binding site" evidence="1">
    <location>
        <position position="239"/>
    </location>
    <ligand>
        <name>Mg(2+)</name>
        <dbReference type="ChEBI" id="CHEBI:18420"/>
    </ligand>
</feature>
<feature type="binding site" evidence="1">
    <location>
        <position position="240"/>
    </location>
    <ligand>
        <name>Mg(2+)</name>
        <dbReference type="ChEBI" id="CHEBI:18420"/>
    </ligand>
</feature>
<feature type="binding site" evidence="1">
    <location>
        <position position="242"/>
    </location>
    <ligand>
        <name>phosphate</name>
        <dbReference type="ChEBI" id="CHEBI:43474"/>
    </ligand>
</feature>
<protein>
    <recommendedName>
        <fullName>Putative phosphatase MPN_427</fullName>
        <ecNumber>3.1.3.-</ecNumber>
    </recommendedName>
</protein>
<evidence type="ECO:0000250" key="1"/>
<evidence type="ECO:0000305" key="2"/>
<gene>
    <name type="ordered locus">MPN_427</name>
    <name type="ORF">A05_orf290</name>
    <name type="ORF">MP414</name>
</gene>
<name>Y427_MYCPN</name>
<organism>
    <name type="scientific">Mycoplasma pneumoniae (strain ATCC 29342 / M129 / Subtype 1)</name>
    <name type="common">Mycoplasmoides pneumoniae</name>
    <dbReference type="NCBI Taxonomy" id="272634"/>
    <lineage>
        <taxon>Bacteria</taxon>
        <taxon>Bacillati</taxon>
        <taxon>Mycoplasmatota</taxon>
        <taxon>Mycoplasmoidales</taxon>
        <taxon>Mycoplasmoidaceae</taxon>
        <taxon>Mycoplasmoides</taxon>
    </lineage>
</organism>
<keyword id="KW-0378">Hydrolase</keyword>
<keyword id="KW-0460">Magnesium</keyword>
<keyword id="KW-0479">Metal-binding</keyword>
<keyword id="KW-1185">Reference proteome</keyword>
<comment type="cofactor">
    <cofactor evidence="1">
        <name>Mg(2+)</name>
        <dbReference type="ChEBI" id="CHEBI:18420"/>
    </cofactor>
</comment>
<comment type="similarity">
    <text evidence="2">Belongs to the HAD-like hydrolase superfamily. Cof family.</text>
</comment>